<proteinExistence type="inferred from homology"/>
<evidence type="ECO:0000255" key="1">
    <source>
        <dbReference type="HAMAP-Rule" id="MF_03104"/>
    </source>
</evidence>
<evidence type="ECO:0000256" key="2">
    <source>
        <dbReference type="SAM" id="MobiDB-lite"/>
    </source>
</evidence>
<organism>
    <name type="scientific">Aspergillus clavatus (strain ATCC 1007 / CBS 513.65 / DSM 816 / NCTC 3887 / NRRL 1 / QM 1276 / 107)</name>
    <dbReference type="NCBI Taxonomy" id="344612"/>
    <lineage>
        <taxon>Eukaryota</taxon>
        <taxon>Fungi</taxon>
        <taxon>Dikarya</taxon>
        <taxon>Ascomycota</taxon>
        <taxon>Pezizomycotina</taxon>
        <taxon>Eurotiomycetes</taxon>
        <taxon>Eurotiomycetidae</taxon>
        <taxon>Eurotiales</taxon>
        <taxon>Aspergillaceae</taxon>
        <taxon>Aspergillus</taxon>
        <taxon>Aspergillus subgen. Fumigati</taxon>
    </lineage>
</organism>
<gene>
    <name evidence="1" type="primary">mdm12</name>
    <name type="ORF">ACLA_020590</name>
</gene>
<reference key="1">
    <citation type="journal article" date="2008" name="PLoS Genet.">
        <title>Genomic islands in the pathogenic filamentous fungus Aspergillus fumigatus.</title>
        <authorList>
            <person name="Fedorova N.D."/>
            <person name="Khaldi N."/>
            <person name="Joardar V.S."/>
            <person name="Maiti R."/>
            <person name="Amedeo P."/>
            <person name="Anderson M.J."/>
            <person name="Crabtree J."/>
            <person name="Silva J.C."/>
            <person name="Badger J.H."/>
            <person name="Albarraq A."/>
            <person name="Angiuoli S."/>
            <person name="Bussey H."/>
            <person name="Bowyer P."/>
            <person name="Cotty P.J."/>
            <person name="Dyer P.S."/>
            <person name="Egan A."/>
            <person name="Galens K."/>
            <person name="Fraser-Liggett C.M."/>
            <person name="Haas B.J."/>
            <person name="Inman J.M."/>
            <person name="Kent R."/>
            <person name="Lemieux S."/>
            <person name="Malavazi I."/>
            <person name="Orvis J."/>
            <person name="Roemer T."/>
            <person name="Ronning C.M."/>
            <person name="Sundaram J.P."/>
            <person name="Sutton G."/>
            <person name="Turner G."/>
            <person name="Venter J.C."/>
            <person name="White O.R."/>
            <person name="Whitty B.R."/>
            <person name="Youngman P."/>
            <person name="Wolfe K.H."/>
            <person name="Goldman G.H."/>
            <person name="Wortman J.R."/>
            <person name="Jiang B."/>
            <person name="Denning D.W."/>
            <person name="Nierman W.C."/>
        </authorList>
    </citation>
    <scope>NUCLEOTIDE SEQUENCE [LARGE SCALE GENOMIC DNA]</scope>
    <source>
        <strain>ATCC 1007 / CBS 513.65 / DSM 816 / NCTC 3887 / NRRL 1 / QM 1276 / 107</strain>
    </source>
</reference>
<protein>
    <recommendedName>
        <fullName evidence="1">Mitochondrial distribution and morphology protein 12</fullName>
    </recommendedName>
    <alternativeName>
        <fullName evidence="1">Mitochondrial inheritance component MDM12</fullName>
    </alternativeName>
</protein>
<dbReference type="EMBL" id="DS027059">
    <property type="protein sequence ID" value="EAW07352.1"/>
    <property type="molecule type" value="Genomic_DNA"/>
</dbReference>
<dbReference type="RefSeq" id="XP_001268778.1">
    <property type="nucleotide sequence ID" value="XM_001268777.1"/>
</dbReference>
<dbReference type="SMR" id="A1CNY1"/>
<dbReference type="STRING" id="344612.A1CNY1"/>
<dbReference type="EnsemblFungi" id="EAW07352">
    <property type="protein sequence ID" value="EAW07352"/>
    <property type="gene ID" value="ACLA_020590"/>
</dbReference>
<dbReference type="GeneID" id="4701111"/>
<dbReference type="KEGG" id="act:ACLA_020590"/>
<dbReference type="VEuPathDB" id="FungiDB:ACLA_020590"/>
<dbReference type="eggNOG" id="ENOG502S3PB">
    <property type="taxonomic scope" value="Eukaryota"/>
</dbReference>
<dbReference type="HOGENOM" id="CLU_026794_0_0_1"/>
<dbReference type="OMA" id="KRAHFCF"/>
<dbReference type="OrthoDB" id="3356905at2759"/>
<dbReference type="Proteomes" id="UP000006701">
    <property type="component" value="Unassembled WGS sequence"/>
</dbReference>
<dbReference type="GO" id="GO:0005789">
    <property type="term" value="C:endoplasmic reticulum membrane"/>
    <property type="evidence" value="ECO:0007669"/>
    <property type="project" value="UniProtKB-SubCell"/>
</dbReference>
<dbReference type="GO" id="GO:0032865">
    <property type="term" value="C:ERMES complex"/>
    <property type="evidence" value="ECO:0007669"/>
    <property type="project" value="UniProtKB-UniRule"/>
</dbReference>
<dbReference type="GO" id="GO:0008289">
    <property type="term" value="F:lipid binding"/>
    <property type="evidence" value="ECO:0007669"/>
    <property type="project" value="UniProtKB-KW"/>
</dbReference>
<dbReference type="GO" id="GO:0000002">
    <property type="term" value="P:mitochondrial genome maintenance"/>
    <property type="evidence" value="ECO:0007669"/>
    <property type="project" value="UniProtKB-UniRule"/>
</dbReference>
<dbReference type="GO" id="GO:1990456">
    <property type="term" value="P:mitochondrion-endoplasmic reticulum membrane tethering"/>
    <property type="evidence" value="ECO:0007669"/>
    <property type="project" value="TreeGrafter"/>
</dbReference>
<dbReference type="GO" id="GO:0015914">
    <property type="term" value="P:phospholipid transport"/>
    <property type="evidence" value="ECO:0007669"/>
    <property type="project" value="TreeGrafter"/>
</dbReference>
<dbReference type="GO" id="GO:0045040">
    <property type="term" value="P:protein insertion into mitochondrial outer membrane"/>
    <property type="evidence" value="ECO:0007669"/>
    <property type="project" value="UniProtKB-UniRule"/>
</dbReference>
<dbReference type="CDD" id="cd21672">
    <property type="entry name" value="SMP_Mdm12"/>
    <property type="match status" value="1"/>
</dbReference>
<dbReference type="HAMAP" id="MF_03104">
    <property type="entry name" value="Mdm12"/>
    <property type="match status" value="1"/>
</dbReference>
<dbReference type="InterPro" id="IPR027532">
    <property type="entry name" value="Mdm12"/>
</dbReference>
<dbReference type="InterPro" id="IPR019411">
    <property type="entry name" value="MMM1_dom"/>
</dbReference>
<dbReference type="InterPro" id="IPR031468">
    <property type="entry name" value="SMP_LBD"/>
</dbReference>
<dbReference type="PANTHER" id="PTHR28204">
    <property type="entry name" value="MITOCHONDRIAL DISTRIBUTION AND MORPHOLOGY PROTEIN 12"/>
    <property type="match status" value="1"/>
</dbReference>
<dbReference type="PANTHER" id="PTHR28204:SF1">
    <property type="entry name" value="MITOCHONDRIAL DISTRIBUTION AND MORPHOLOGY PROTEIN 12"/>
    <property type="match status" value="1"/>
</dbReference>
<dbReference type="Pfam" id="PF10296">
    <property type="entry name" value="MMM1"/>
    <property type="match status" value="1"/>
</dbReference>
<dbReference type="PROSITE" id="PS51847">
    <property type="entry name" value="SMP"/>
    <property type="match status" value="1"/>
</dbReference>
<name>MDM12_ASPCL</name>
<sequence>MSIDINWRTATSGPDGEALAERIRSFIHDRFQQVALPRFIRSVQVHSFDFGTIPPELEIKDFCEPFADFYEEDDDADTSDVSEDLLSEHSSQWDRTHSELNEPPYREESAMNHGLRDPFHEGFPPSPLRSPLGEHLNPHFLPRAGTPGIPGGTSNLGYHLMSLGGLSGTQTPLAAVAGGNPFASGWSDSGMGFGNRGRSERQGPIPQHRPEPEIDTSNSTSRPSTANTLPSHLSESNNLNADGATGRNERGSLHNGDPLADHTCSGHLPLPPRMRERRPEDFQVLCHAKYAGDVRLSLTAEILLDYPMPSFVGLPLKLNVTGITFDGVAVVAYIRKRVHFCFLSAEDADALIGSEQQQESGGDDHRPRSGADSSAHTSQKRQGGLLQEIRVESEIGRKENGKQVLKNVGKVERFVLAQVRRIFEEELVYPSFWTFLI</sequence>
<accession>A1CNY1</accession>
<feature type="chain" id="PRO_0000384268" description="Mitochondrial distribution and morphology protein 12">
    <location>
        <begin position="1"/>
        <end position="437"/>
    </location>
</feature>
<feature type="domain" description="SMP-LTD" evidence="1">
    <location>
        <begin position="1"/>
        <end position="437"/>
    </location>
</feature>
<feature type="region of interest" description="Disordered" evidence="2">
    <location>
        <begin position="73"/>
        <end position="101"/>
    </location>
</feature>
<feature type="region of interest" description="Disordered" evidence="2">
    <location>
        <begin position="187"/>
        <end position="274"/>
    </location>
</feature>
<feature type="region of interest" description="Disordered" evidence="2">
    <location>
        <begin position="354"/>
        <end position="384"/>
    </location>
</feature>
<feature type="compositionally biased region" description="Acidic residues" evidence="2">
    <location>
        <begin position="73"/>
        <end position="85"/>
    </location>
</feature>
<feature type="compositionally biased region" description="Basic and acidic residues" evidence="2">
    <location>
        <begin position="91"/>
        <end position="101"/>
    </location>
</feature>
<feature type="compositionally biased region" description="Polar residues" evidence="2">
    <location>
        <begin position="215"/>
        <end position="240"/>
    </location>
</feature>
<feature type="compositionally biased region" description="Polar residues" evidence="2">
    <location>
        <begin position="371"/>
        <end position="381"/>
    </location>
</feature>
<keyword id="KW-0256">Endoplasmic reticulum</keyword>
<keyword id="KW-0445">Lipid transport</keyword>
<keyword id="KW-0446">Lipid-binding</keyword>
<keyword id="KW-0472">Membrane</keyword>
<keyword id="KW-0496">Mitochondrion</keyword>
<keyword id="KW-1000">Mitochondrion outer membrane</keyword>
<keyword id="KW-1185">Reference proteome</keyword>
<keyword id="KW-0813">Transport</keyword>
<comment type="function">
    <text evidence="1">Component of the ERMES/MDM complex, which serves as a molecular tether to connect the endoplasmic reticulum (ER) and mitochondria. Components of this complex are involved in the control of mitochondrial shape and protein biogenesis, and function in nonvesicular lipid trafficking between the ER and mitochondria. Mdm12 is required for the interaction of the ER-resident membrane protein mmm1 and the outer mitochondrial membrane-resident beta-barrel protein mdm10. The mdm12-mmm1 subcomplex functions in the major beta-barrel assembly pathway that is responsible for biogenesis of all mitochondrial outer membrane beta-barrel proteins, and acts in a late step after the SAM complex. The mdm10-mdm12-mmm1 subcomplex further acts in the TOM40-specific pathway after the action of the mdm12-mmm1 complex. Essential for establishing and maintaining the structure of mitochondria and maintenance of mtDNA nucleoids.</text>
</comment>
<comment type="subunit">
    <text evidence="1">Component of the ER-mitochondria encounter structure (ERMES) or MDM complex, composed of mmm1, mdm10, mdm12 and mdm34. A mmm1 homodimer associates with one molecule of mdm12 on each side in a pairwise head-to-tail manner, and the SMP-LTD domains of mmm1 and mdm12 generate a continuous hydrophobic tunnel for phospholipid trafficking.</text>
</comment>
<comment type="subcellular location">
    <subcellularLocation>
        <location evidence="1">Mitochondrion outer membrane</location>
        <topology evidence="1">Peripheral membrane protein</topology>
        <orientation evidence="1">Cytoplasmic side</orientation>
    </subcellularLocation>
    <subcellularLocation>
        <location evidence="1">Endoplasmic reticulum membrane</location>
        <topology evidence="1">Peripheral membrane protein</topology>
        <orientation evidence="1">Cytoplasmic side</orientation>
    </subcellularLocation>
    <text evidence="1">The ERMES/MDM complex localizes to a few discrete foci (around 10 per single cell), that represent mitochondria-endoplasmic reticulum junctions. These foci are often found next to mtDNA nucleoids.</text>
</comment>
<comment type="domain">
    <text evidence="1">The SMP-LTD domain is a barrel-like domain that can bind various types of glycerophospholipids in its interior and mediate their transfer between two adjacent bilayers.</text>
</comment>
<comment type="similarity">
    <text evidence="1">Belongs to the MDM12 family.</text>
</comment>